<comment type="function">
    <text evidence="1">Probable sesquiterpene synthase.</text>
</comment>
<comment type="cofactor">
    <cofactor evidence="1">
        <name>Mg(2+)</name>
        <dbReference type="ChEBI" id="CHEBI:18420"/>
    </cofactor>
    <text evidence="1">Binds 3 Mg(2+) ions per subunit.</text>
</comment>
<comment type="domain">
    <text evidence="1">The Asp-Asp-Xaa-Xaa-Asp/Glu (DDXXD/E) motif is important for the catalytic activity, presumably through binding to Mg(2+).</text>
</comment>
<comment type="miscellaneous">
    <text evidence="3">Does not produce any detectable product when tested in vitro.</text>
</comment>
<comment type="similarity">
    <text evidence="2">Belongs to the terpene synthase family.</text>
</comment>
<protein>
    <recommendedName>
        <fullName>Probable terpene synthase 9</fullName>
        <shortName>RcSeTPS9</shortName>
        <ecNumber>4.2.3.-</ecNumber>
    </recommendedName>
</protein>
<accession>B9RPM3</accession>
<keyword id="KW-0456">Lyase</keyword>
<keyword id="KW-0460">Magnesium</keyword>
<keyword id="KW-0479">Metal-binding</keyword>
<keyword id="KW-1185">Reference proteome</keyword>
<proteinExistence type="inferred from homology"/>
<reference key="1">
    <citation type="journal article" date="2010" name="Nat. Biotechnol.">
        <title>Draft genome sequence of the oilseed species Ricinus communis.</title>
        <authorList>
            <person name="Chan A.P."/>
            <person name="Crabtree J."/>
            <person name="Zhao Q."/>
            <person name="Lorenzi H."/>
            <person name="Orvis J."/>
            <person name="Puiu D."/>
            <person name="Melake-Berhan A."/>
            <person name="Jones K.M."/>
            <person name="Redman J."/>
            <person name="Chen G."/>
            <person name="Cahoon E.B."/>
            <person name="Gedil M."/>
            <person name="Stanke M."/>
            <person name="Haas B.J."/>
            <person name="Wortman J.R."/>
            <person name="Fraser-Liggett C.M."/>
            <person name="Ravel J."/>
            <person name="Rabinowicz P.D."/>
        </authorList>
    </citation>
    <scope>NUCLEOTIDE SEQUENCE [LARGE SCALE GENOMIC DNA]</scope>
    <source>
        <strain>cv. Hale</strain>
    </source>
</reference>
<reference key="2">
    <citation type="journal article" date="2012" name="Phytochemistry">
        <title>Functional characterization of four sesquiterpene synthases from Ricinus communis (castor bean).</title>
        <authorList>
            <person name="Xie X."/>
            <person name="Kirby J."/>
            <person name="Keasling J.D."/>
        </authorList>
    </citation>
    <scope>GENE NAME</scope>
</reference>
<sequence length="584" mass="67734">MEIVFSSSLSSTLTVTKILRSPRHATTGNMQDYSRFPLFFTIASRSNASQAKHRRSANYHPTIWDPKAIECLRTPYTYDGVHGARLQKLKDEVRSLLTTFTKEPCGQLKLIDSMQRLGVSYHFREEIEEILNLVELDSDSDLYTTALHFRLLRQHGFTISKEVFEKFRNEDGKFKDSLKEDILGLLSLYDASYLGMHGEHILEEAKDFSTEQLKSLLGRSQGDIVTYQVKQALDVPLHWRMQRIENRNYINIYQKEDTNNLALLELAKLDYNLVQSVYQIELKELARWWIALGFREKLHFSRDRLMENYLWSMGMIFEPHFSKCRIYLTKFICILSSIDDMYDIYGSLDELELFTSALKRWDPMALEELPDYMKICYLAILNFASELVYDVLKEEGLYTLPFIRDEWVKLCQAYLVEARWFNSGYTPTFDEYLENAWISVGGHEAIVHACALLGHTSTEDFQNFLKHGFELIYWSSLLVRLNDDLGTSQAEIKRGDVVKSIQCYMIEKGVSEKEAKDHVKGLISHAWKVLNEESVKCSLSRSFVNVCLNMTRTAQCIFQYGDGIGTSIGVTKDRLEFLIVKPIL</sequence>
<evidence type="ECO:0000250" key="1"/>
<evidence type="ECO:0000305" key="2"/>
<evidence type="ECO:0000305" key="3">
    <source>
    </source>
</evidence>
<gene>
    <name type="primary">TPS9</name>
    <name type="ORF">RCOM_1545320</name>
</gene>
<feature type="chain" id="PRO_0000422207" description="Probable terpene synthase 9">
    <location>
        <begin position="1"/>
        <end position="584"/>
    </location>
</feature>
<feature type="short sequence motif" description="DDXXD motif">
    <location>
        <begin position="339"/>
        <end position="343"/>
    </location>
</feature>
<feature type="binding site" evidence="1">
    <location>
        <position position="339"/>
    </location>
    <ligand>
        <name>Mg(2+)</name>
        <dbReference type="ChEBI" id="CHEBI:18420"/>
        <label>1</label>
    </ligand>
</feature>
<feature type="binding site" evidence="1">
    <location>
        <position position="339"/>
    </location>
    <ligand>
        <name>Mg(2+)</name>
        <dbReference type="ChEBI" id="CHEBI:18420"/>
        <label>2</label>
    </ligand>
</feature>
<feature type="binding site" evidence="1">
    <location>
        <position position="343"/>
    </location>
    <ligand>
        <name>Mg(2+)</name>
        <dbReference type="ChEBI" id="CHEBI:18420"/>
        <label>1</label>
    </ligand>
</feature>
<feature type="binding site" evidence="1">
    <location>
        <position position="343"/>
    </location>
    <ligand>
        <name>Mg(2+)</name>
        <dbReference type="ChEBI" id="CHEBI:18420"/>
        <label>2</label>
    </ligand>
</feature>
<feature type="binding site" evidence="1">
    <location>
        <position position="491"/>
    </location>
    <ligand>
        <name>Mg(2+)</name>
        <dbReference type="ChEBI" id="CHEBI:18420"/>
        <label>3</label>
    </ligand>
</feature>
<name>TPS9_RICCO</name>
<organism>
    <name type="scientific">Ricinus communis</name>
    <name type="common">Castor bean</name>
    <dbReference type="NCBI Taxonomy" id="3988"/>
    <lineage>
        <taxon>Eukaryota</taxon>
        <taxon>Viridiplantae</taxon>
        <taxon>Streptophyta</taxon>
        <taxon>Embryophyta</taxon>
        <taxon>Tracheophyta</taxon>
        <taxon>Spermatophyta</taxon>
        <taxon>Magnoliopsida</taxon>
        <taxon>eudicotyledons</taxon>
        <taxon>Gunneridae</taxon>
        <taxon>Pentapetalae</taxon>
        <taxon>rosids</taxon>
        <taxon>fabids</taxon>
        <taxon>Malpighiales</taxon>
        <taxon>Euphorbiaceae</taxon>
        <taxon>Acalyphoideae</taxon>
        <taxon>Acalypheae</taxon>
        <taxon>Ricinus</taxon>
    </lineage>
</organism>
<dbReference type="EC" id="4.2.3.-"/>
<dbReference type="EMBL" id="EQ973796">
    <property type="protein sequence ID" value="EEF46639.1"/>
    <property type="molecule type" value="Genomic_DNA"/>
</dbReference>
<dbReference type="SMR" id="B9RPM3"/>
<dbReference type="STRING" id="3988.B9RPM3"/>
<dbReference type="eggNOG" id="ENOG502QUH3">
    <property type="taxonomic scope" value="Eukaryota"/>
</dbReference>
<dbReference type="InParanoid" id="B9RPM3"/>
<dbReference type="Proteomes" id="UP000008311">
    <property type="component" value="Unassembled WGS sequence"/>
</dbReference>
<dbReference type="GO" id="GO:0000287">
    <property type="term" value="F:magnesium ion binding"/>
    <property type="evidence" value="ECO:0007669"/>
    <property type="project" value="InterPro"/>
</dbReference>
<dbReference type="GO" id="GO:0010333">
    <property type="term" value="F:terpene synthase activity"/>
    <property type="evidence" value="ECO:0007669"/>
    <property type="project" value="InterPro"/>
</dbReference>
<dbReference type="GO" id="GO:0016102">
    <property type="term" value="P:diterpenoid biosynthetic process"/>
    <property type="evidence" value="ECO:0007669"/>
    <property type="project" value="InterPro"/>
</dbReference>
<dbReference type="GO" id="GO:0120251">
    <property type="term" value="P:hydrocarbon biosynthetic process"/>
    <property type="evidence" value="ECO:0007669"/>
    <property type="project" value="UniProtKB-ARBA"/>
</dbReference>
<dbReference type="CDD" id="cd00684">
    <property type="entry name" value="Terpene_cyclase_plant_C1"/>
    <property type="match status" value="1"/>
</dbReference>
<dbReference type="FunFam" id="1.10.600.10:FF:000007">
    <property type="entry name" value="Isoprene synthase, chloroplastic"/>
    <property type="match status" value="1"/>
</dbReference>
<dbReference type="FunFam" id="1.50.10.130:FF:000001">
    <property type="entry name" value="Isoprene synthase, chloroplastic"/>
    <property type="match status" value="1"/>
</dbReference>
<dbReference type="Gene3D" id="1.10.600.10">
    <property type="entry name" value="Farnesyl Diphosphate Synthase"/>
    <property type="match status" value="1"/>
</dbReference>
<dbReference type="Gene3D" id="1.50.10.130">
    <property type="entry name" value="Terpene synthase, N-terminal domain"/>
    <property type="match status" value="1"/>
</dbReference>
<dbReference type="InterPro" id="IPR008949">
    <property type="entry name" value="Isoprenoid_synthase_dom_sf"/>
</dbReference>
<dbReference type="InterPro" id="IPR034741">
    <property type="entry name" value="Terpene_cyclase-like_1_C"/>
</dbReference>
<dbReference type="InterPro" id="IPR044814">
    <property type="entry name" value="Terpene_cyclase_plant_C1"/>
</dbReference>
<dbReference type="InterPro" id="IPR001906">
    <property type="entry name" value="Terpene_synth_N"/>
</dbReference>
<dbReference type="InterPro" id="IPR036965">
    <property type="entry name" value="Terpene_synth_N_sf"/>
</dbReference>
<dbReference type="InterPro" id="IPR050148">
    <property type="entry name" value="Terpene_synthase-like"/>
</dbReference>
<dbReference type="InterPro" id="IPR005630">
    <property type="entry name" value="Terpene_synthase_metal-bd"/>
</dbReference>
<dbReference type="InterPro" id="IPR008930">
    <property type="entry name" value="Terpenoid_cyclase/PrenylTrfase"/>
</dbReference>
<dbReference type="PANTHER" id="PTHR31225">
    <property type="entry name" value="OS04G0344100 PROTEIN-RELATED"/>
    <property type="match status" value="1"/>
</dbReference>
<dbReference type="PANTHER" id="PTHR31225:SF98">
    <property type="entry name" value="TERPENE SYNTHASE 9-RELATED"/>
    <property type="match status" value="1"/>
</dbReference>
<dbReference type="Pfam" id="PF01397">
    <property type="entry name" value="Terpene_synth"/>
    <property type="match status" value="1"/>
</dbReference>
<dbReference type="Pfam" id="PF03936">
    <property type="entry name" value="Terpene_synth_C"/>
    <property type="match status" value="1"/>
</dbReference>
<dbReference type="SFLD" id="SFLDS00005">
    <property type="entry name" value="Isoprenoid_Synthase_Type_I"/>
    <property type="match status" value="1"/>
</dbReference>
<dbReference type="SFLD" id="SFLDG01019">
    <property type="entry name" value="Terpene_Cyclase_Like_1_C_Termi"/>
    <property type="match status" value="1"/>
</dbReference>
<dbReference type="SUPFAM" id="SSF48239">
    <property type="entry name" value="Terpenoid cyclases/Protein prenyltransferases"/>
    <property type="match status" value="1"/>
</dbReference>
<dbReference type="SUPFAM" id="SSF48576">
    <property type="entry name" value="Terpenoid synthases"/>
    <property type="match status" value="1"/>
</dbReference>